<keyword id="KW-0997">Cell inner membrane</keyword>
<keyword id="KW-1003">Cell membrane</keyword>
<keyword id="KW-0460">Magnesium</keyword>
<keyword id="KW-0472">Membrane</keyword>
<keyword id="KW-0808">Transferase</keyword>
<keyword id="KW-0812">Transmembrane</keyword>
<keyword id="KW-1133">Transmembrane helix</keyword>
<keyword id="KW-0831">Ubiquinone biosynthesis</keyword>
<evidence type="ECO:0000255" key="1">
    <source>
        <dbReference type="HAMAP-Rule" id="MF_01635"/>
    </source>
</evidence>
<accession>B2I675</accession>
<name>UBIA_XYLF2</name>
<proteinExistence type="inferred from homology"/>
<dbReference type="EC" id="2.5.1.39" evidence="1"/>
<dbReference type="EMBL" id="CP001011">
    <property type="protein sequence ID" value="ACB91502.1"/>
    <property type="molecule type" value="Genomic_DNA"/>
</dbReference>
<dbReference type="RefSeq" id="WP_004087154.1">
    <property type="nucleotide sequence ID" value="NC_010577.1"/>
</dbReference>
<dbReference type="SMR" id="B2I675"/>
<dbReference type="GeneID" id="93903736"/>
<dbReference type="KEGG" id="xfn:XfasM23_0044"/>
<dbReference type="HOGENOM" id="CLU_034879_1_0_6"/>
<dbReference type="UniPathway" id="UPA00232"/>
<dbReference type="Proteomes" id="UP000001698">
    <property type="component" value="Chromosome"/>
</dbReference>
<dbReference type="GO" id="GO:0005886">
    <property type="term" value="C:plasma membrane"/>
    <property type="evidence" value="ECO:0007669"/>
    <property type="project" value="UniProtKB-SubCell"/>
</dbReference>
<dbReference type="GO" id="GO:0008412">
    <property type="term" value="F:4-hydroxybenzoate polyprenyltransferase activity"/>
    <property type="evidence" value="ECO:0007669"/>
    <property type="project" value="UniProtKB-UniRule"/>
</dbReference>
<dbReference type="GO" id="GO:0006744">
    <property type="term" value="P:ubiquinone biosynthetic process"/>
    <property type="evidence" value="ECO:0007669"/>
    <property type="project" value="UniProtKB-UniRule"/>
</dbReference>
<dbReference type="CDD" id="cd13959">
    <property type="entry name" value="PT_UbiA_COQ2"/>
    <property type="match status" value="1"/>
</dbReference>
<dbReference type="FunFam" id="1.10.357.140:FF:000002">
    <property type="entry name" value="4-hydroxybenzoate octaprenyltransferase"/>
    <property type="match status" value="1"/>
</dbReference>
<dbReference type="FunFam" id="1.20.120.1780:FF:000001">
    <property type="entry name" value="4-hydroxybenzoate octaprenyltransferase"/>
    <property type="match status" value="1"/>
</dbReference>
<dbReference type="Gene3D" id="1.10.357.140">
    <property type="entry name" value="UbiA prenyltransferase"/>
    <property type="match status" value="1"/>
</dbReference>
<dbReference type="Gene3D" id="1.20.120.1780">
    <property type="entry name" value="UbiA prenyltransferase"/>
    <property type="match status" value="1"/>
</dbReference>
<dbReference type="HAMAP" id="MF_01635">
    <property type="entry name" value="UbiA"/>
    <property type="match status" value="1"/>
</dbReference>
<dbReference type="InterPro" id="IPR006370">
    <property type="entry name" value="HB_polyprenyltransferase-like"/>
</dbReference>
<dbReference type="InterPro" id="IPR039653">
    <property type="entry name" value="Prenyltransferase"/>
</dbReference>
<dbReference type="InterPro" id="IPR000537">
    <property type="entry name" value="UbiA_prenyltransferase"/>
</dbReference>
<dbReference type="InterPro" id="IPR030470">
    <property type="entry name" value="UbiA_prenylTrfase_CS"/>
</dbReference>
<dbReference type="InterPro" id="IPR044878">
    <property type="entry name" value="UbiA_sf"/>
</dbReference>
<dbReference type="NCBIfam" id="TIGR01474">
    <property type="entry name" value="ubiA_proteo"/>
    <property type="match status" value="1"/>
</dbReference>
<dbReference type="PANTHER" id="PTHR11048:SF28">
    <property type="entry name" value="4-HYDROXYBENZOATE POLYPRENYLTRANSFERASE, MITOCHONDRIAL"/>
    <property type="match status" value="1"/>
</dbReference>
<dbReference type="PANTHER" id="PTHR11048">
    <property type="entry name" value="PRENYLTRANSFERASES"/>
    <property type="match status" value="1"/>
</dbReference>
<dbReference type="Pfam" id="PF01040">
    <property type="entry name" value="UbiA"/>
    <property type="match status" value="1"/>
</dbReference>
<dbReference type="PROSITE" id="PS00943">
    <property type="entry name" value="UBIA"/>
    <property type="match status" value="1"/>
</dbReference>
<reference key="1">
    <citation type="journal article" date="2010" name="J. Bacteriol.">
        <title>Whole genome sequences of two Xylella fastidiosa strains (M12 and M23) causing almond leaf scorch disease in California.</title>
        <authorList>
            <person name="Chen J."/>
            <person name="Xie G."/>
            <person name="Han S."/>
            <person name="Chertkov O."/>
            <person name="Sims D."/>
            <person name="Civerolo E.L."/>
        </authorList>
    </citation>
    <scope>NUCLEOTIDE SEQUENCE [LARGE SCALE GENOMIC DNA]</scope>
    <source>
        <strain>M23</strain>
    </source>
</reference>
<organism>
    <name type="scientific">Xylella fastidiosa (strain M23)</name>
    <dbReference type="NCBI Taxonomy" id="405441"/>
    <lineage>
        <taxon>Bacteria</taxon>
        <taxon>Pseudomonadati</taxon>
        <taxon>Pseudomonadota</taxon>
        <taxon>Gammaproteobacteria</taxon>
        <taxon>Lysobacterales</taxon>
        <taxon>Lysobacteraceae</taxon>
        <taxon>Xylella</taxon>
    </lineage>
</organism>
<gene>
    <name evidence="1" type="primary">ubiA</name>
    <name type="ordered locus">XfasM23_0044</name>
</gene>
<sequence length="299" mass="33965">MAYERFTSAITLLLHWRNRLDPYWKLARGDRPVGFLLLLWPTWWALWLAADGVPPWWTLCVFTTGIWLTRSAGCVINDYTDRWLDPHVERTCTRPLVTGTVSPRNALLMFGTLMLIAFGLVLTMNRLTVLLSVAGLFLAMTYPYLKRYTHLPQVYLGIAFGWGIPMAFAAIQGKVPTLAWLLYVANILWTTAYDTWYAMVDRDDDIKMGAKSTAILFADLDLVVQGVLYTLMLLTLCLVGLRATLSHTYWISLISAVALIGYQFIIARRREPTACFRAFMHNNWVGMTIFAGIALATTH</sequence>
<protein>
    <recommendedName>
        <fullName evidence="1">4-hydroxybenzoate octaprenyltransferase</fullName>
        <ecNumber evidence="1">2.5.1.39</ecNumber>
    </recommendedName>
    <alternativeName>
        <fullName evidence="1">4-HB polyprenyltransferase</fullName>
    </alternativeName>
</protein>
<feature type="chain" id="PRO_1000186699" description="4-hydroxybenzoate octaprenyltransferase">
    <location>
        <begin position="1"/>
        <end position="299"/>
    </location>
</feature>
<feature type="transmembrane region" description="Helical" evidence="1">
    <location>
        <begin position="33"/>
        <end position="53"/>
    </location>
</feature>
<feature type="transmembrane region" description="Helical" evidence="1">
    <location>
        <begin position="56"/>
        <end position="76"/>
    </location>
</feature>
<feature type="transmembrane region" description="Helical" evidence="1">
    <location>
        <begin position="105"/>
        <end position="125"/>
    </location>
</feature>
<feature type="transmembrane region" description="Helical" evidence="1">
    <location>
        <begin position="151"/>
        <end position="171"/>
    </location>
</feature>
<feature type="transmembrane region" description="Helical" evidence="1">
    <location>
        <begin position="180"/>
        <end position="200"/>
    </location>
</feature>
<feature type="transmembrane region" description="Helical" evidence="1">
    <location>
        <begin position="214"/>
        <end position="234"/>
    </location>
</feature>
<feature type="transmembrane region" description="Helical" evidence="1">
    <location>
        <begin position="247"/>
        <end position="267"/>
    </location>
</feature>
<feature type="transmembrane region" description="Helical" evidence="1">
    <location>
        <begin position="278"/>
        <end position="298"/>
    </location>
</feature>
<comment type="function">
    <text evidence="1">Catalyzes the prenylation of para-hydroxybenzoate (PHB) with an all-trans polyprenyl group. Mediates the second step in the final reaction sequence of ubiquinone-8 (UQ-8) biosynthesis, which is the condensation of the polyisoprenoid side chain with PHB, generating the first membrane-bound Q intermediate 3-octaprenyl-4-hydroxybenzoate.</text>
</comment>
<comment type="catalytic activity">
    <reaction evidence="1">
        <text>all-trans-octaprenyl diphosphate + 4-hydroxybenzoate = 4-hydroxy-3-(all-trans-octaprenyl)benzoate + diphosphate</text>
        <dbReference type="Rhea" id="RHEA:27782"/>
        <dbReference type="ChEBI" id="CHEBI:1617"/>
        <dbReference type="ChEBI" id="CHEBI:17879"/>
        <dbReference type="ChEBI" id="CHEBI:33019"/>
        <dbReference type="ChEBI" id="CHEBI:57711"/>
        <dbReference type="EC" id="2.5.1.39"/>
    </reaction>
</comment>
<comment type="cofactor">
    <cofactor evidence="1">
        <name>Mg(2+)</name>
        <dbReference type="ChEBI" id="CHEBI:18420"/>
    </cofactor>
</comment>
<comment type="pathway">
    <text evidence="1">Cofactor biosynthesis; ubiquinone biosynthesis.</text>
</comment>
<comment type="subcellular location">
    <subcellularLocation>
        <location evidence="1">Cell inner membrane</location>
        <topology evidence="1">Multi-pass membrane protein</topology>
    </subcellularLocation>
</comment>
<comment type="similarity">
    <text evidence="1">Belongs to the UbiA prenyltransferase family.</text>
</comment>